<name>TRBF_RHIRD</name>
<geneLocation type="plasmid">
    <name>pTiA6NC</name>
</geneLocation>
<reference key="1">
    <citation type="journal article" date="1996" name="J. Bacteriol.">
        <title>The conjugal transfer system of Agrobacterium tumefaciens octopine-type Ti plasmids is closely related to the transfer system of an IncP plasmid and distantly related to Ti plasmid vir genes.</title>
        <authorList>
            <person name="Alt-Morbe J."/>
            <person name="Stryker J.L."/>
            <person name="Fuqua C."/>
            <person name="Li P.L."/>
            <person name="Farrand S.K."/>
            <person name="Winans S.C."/>
        </authorList>
    </citation>
    <scope>NUCLEOTIDE SEQUENCE [GENOMIC DNA]</scope>
</reference>
<organism>
    <name type="scientific">Rhizobium radiobacter</name>
    <name type="common">Agrobacterium tumefaciens</name>
    <name type="synonym">Agrobacterium radiobacter</name>
    <dbReference type="NCBI Taxonomy" id="358"/>
    <lineage>
        <taxon>Bacteria</taxon>
        <taxon>Pseudomonadati</taxon>
        <taxon>Pseudomonadota</taxon>
        <taxon>Alphaproteobacteria</taxon>
        <taxon>Hyphomicrobiales</taxon>
        <taxon>Rhizobiaceae</taxon>
        <taxon>Rhizobium/Agrobacterium group</taxon>
        <taxon>Agrobacterium</taxon>
        <taxon>Agrobacterium tumefaciens complex</taxon>
    </lineage>
</organism>
<comment type="subcellular location">
    <subcellularLocation>
        <location evidence="2">Cell membrane</location>
        <topology evidence="2">Single-pass membrane protein</topology>
    </subcellularLocation>
</comment>
<comment type="similarity">
    <text evidence="2">Belongs to the TrbF family.</text>
</comment>
<proteinExistence type="inferred from homology"/>
<accession>P54914</accession>
<gene>
    <name type="primary">trbF</name>
</gene>
<sequence length="220" mass="24669">MAGTTPPDNPYIAARNEWNERYGSYVKAAAAWRIVGITGMTMAVIGFGYALYQSTQVKLIPYIVEVDKLGTAVNAGFPQQIEYADPRVVRATLGSFVSNFRSVTPDAVVQKQYIDRTYGLLRTSDPATEKVNAWFRSNSPFEKAKTATVAIEVNNIVALSNQSYQVDWTEFERDRRGKETATRRFRGIATVTLTPPQDEGVIRLNPIGLYLRDFDWTAQL</sequence>
<dbReference type="EMBL" id="AF242881">
    <property type="protein sequence ID" value="AAB95101.1"/>
    <property type="molecule type" value="Genomic_DNA"/>
</dbReference>
<dbReference type="RefSeq" id="NP_059753.1">
    <property type="nucleotide sequence ID" value="NC_002377.1"/>
</dbReference>
<dbReference type="RefSeq" id="WP_010892441.1">
    <property type="nucleotide sequence ID" value="NZ_QSNU01000012.1"/>
</dbReference>
<dbReference type="SMR" id="P54914"/>
<dbReference type="eggNOG" id="COG3701">
    <property type="taxonomic scope" value="Bacteria"/>
</dbReference>
<dbReference type="OrthoDB" id="597581at2"/>
<dbReference type="GO" id="GO:0005886">
    <property type="term" value="C:plasma membrane"/>
    <property type="evidence" value="ECO:0007669"/>
    <property type="project" value="UniProtKB-SubCell"/>
</dbReference>
<dbReference type="CDD" id="cd16425">
    <property type="entry name" value="TrbF"/>
    <property type="match status" value="1"/>
</dbReference>
<dbReference type="Gene3D" id="3.10.450.230">
    <property type="entry name" value="VirB8 protein"/>
    <property type="match status" value="1"/>
</dbReference>
<dbReference type="InterPro" id="IPR032710">
    <property type="entry name" value="NTF2-like_dom_sf"/>
</dbReference>
<dbReference type="InterPro" id="IPR035658">
    <property type="entry name" value="TrbF"/>
</dbReference>
<dbReference type="InterPro" id="IPR007430">
    <property type="entry name" value="VirB8"/>
</dbReference>
<dbReference type="NCBIfam" id="NF010410">
    <property type="entry name" value="PRK13836.1"/>
    <property type="match status" value="1"/>
</dbReference>
<dbReference type="Pfam" id="PF04335">
    <property type="entry name" value="VirB8"/>
    <property type="match status" value="1"/>
</dbReference>
<dbReference type="SUPFAM" id="SSF54427">
    <property type="entry name" value="NTF2-like"/>
    <property type="match status" value="1"/>
</dbReference>
<evidence type="ECO:0000255" key="1"/>
<evidence type="ECO:0000305" key="2"/>
<protein>
    <recommendedName>
        <fullName>Conjugal transfer protein TrbF</fullName>
    </recommendedName>
</protein>
<feature type="chain" id="PRO_0000065615" description="Conjugal transfer protein TrbF">
    <location>
        <begin position="1"/>
        <end position="220"/>
    </location>
</feature>
<feature type="transmembrane region" description="Helical" evidence="1">
    <location>
        <begin position="28"/>
        <end position="52"/>
    </location>
</feature>
<keyword id="KW-1003">Cell membrane</keyword>
<keyword id="KW-0184">Conjugation</keyword>
<keyword id="KW-0472">Membrane</keyword>
<keyword id="KW-0614">Plasmid</keyword>
<keyword id="KW-0812">Transmembrane</keyword>
<keyword id="KW-1133">Transmembrane helix</keyword>